<accession>Q5APC8</accession>
<accession>A0A1D8PEN3</accession>
<comment type="function">
    <text evidence="5 6">Component of the DASH complex that connects microtubules with kinetochores and couples microtubule depolymerisation to chromosome movement; it is involved in retrieving kinetochores to the spindle poles before their re-orientation on the spindle in early mitosis and allows microtubule depolymerization to pull chromosomes apart and resist detachment during anaphase (PubMed:21549601). Kinetochores, consisting of a centromere-associated inner segment and a microtubule-contacting outer segment, play a crucial role in chromosome segregation by mediating the physical connection between centromeric DNA and microtubules (PubMed:21549601). Kinetochores also serve as an input point for the spindle assembly checkpoint, which delays anaphase until all chromosomes have bioriented on the mitotic spindle (PubMed:21571923).</text>
</comment>
<comment type="subunit">
    <text evidence="1 2">Component of the DASH complex consisting of ASK1, DAD1, DAD2, DAD3, DAD4, DAM1, DUO1, HSK3, SPC19 and SPC34, with a stoichiometry of one copy of each subunit per complex. Multiple DASH complexes oligomerize to form a ring that encircles spindle microtubules and organizes the rod-like NDC80 complexes of the outer kinetochore. DASH complex oligomerization strengthens microtubule attachments. Within the complex, DAM1 and DUO1 may form the microtubule connections (By similarity). On cytoplasmic microtubules, DASH complexes appear to form patches instead of rings (By similarity). Interacts with the outer kinetochore component NDC80; the interaction is direct (By similarity).</text>
</comment>
<comment type="subcellular location">
    <subcellularLocation>
        <location evidence="6 8">Nucleus</location>
    </subcellularLocation>
    <subcellularLocation>
        <location evidence="2">Cytoplasm</location>
        <location evidence="2">Cytoskeleton</location>
        <location evidence="2">Spindle</location>
    </subcellularLocation>
    <subcellularLocation>
        <location evidence="5 6">Chromosome</location>
        <location evidence="5 6">Centromere</location>
        <location evidence="5 6">Kinetochore</location>
    </subcellularLocation>
    <text evidence="6">Localization to the kinetochore is independent of microtubules.</text>
</comment>
<comment type="disruption phenotype">
    <text evidence="5 6">Kinetochore declustering (PubMed:21549601). Short mitotic spindle and an apparent absence of interpolar and cytoplasmic microtubules (PubMed:21571923). Cell cycle arrest in mitosis with unseparated DNA (PubMed:21571923). Inviable (PubMed:21549601, PubMed:21571923).</text>
</comment>
<comment type="similarity">
    <text evidence="7">Belongs to the DASH complex DAM1 family.</text>
</comment>
<reference key="1">
    <citation type="journal article" date="2004" name="Proc. Natl. Acad. Sci. U.S.A.">
        <title>The diploid genome sequence of Candida albicans.</title>
        <authorList>
            <person name="Jones T."/>
            <person name="Federspiel N.A."/>
            <person name="Chibana H."/>
            <person name="Dungan J."/>
            <person name="Kalman S."/>
            <person name="Magee B.B."/>
            <person name="Newport G."/>
            <person name="Thorstenson Y.R."/>
            <person name="Agabian N."/>
            <person name="Magee P.T."/>
            <person name="Davis R.W."/>
            <person name="Scherer S."/>
        </authorList>
    </citation>
    <scope>NUCLEOTIDE SEQUENCE [LARGE SCALE GENOMIC DNA]</scope>
    <source>
        <strain>SC5314 / ATCC MYA-2876</strain>
    </source>
</reference>
<reference key="2">
    <citation type="journal article" date="2007" name="Genome Biol.">
        <title>Assembly of the Candida albicans genome into sixteen supercontigs aligned on the eight chromosomes.</title>
        <authorList>
            <person name="van het Hoog M."/>
            <person name="Rast T.J."/>
            <person name="Martchenko M."/>
            <person name="Grindle S."/>
            <person name="Dignard D."/>
            <person name="Hogues H."/>
            <person name="Cuomo C."/>
            <person name="Berriman M."/>
            <person name="Scherer S."/>
            <person name="Magee B.B."/>
            <person name="Whiteway M."/>
            <person name="Chibana H."/>
            <person name="Nantel A."/>
            <person name="Magee P.T."/>
        </authorList>
    </citation>
    <scope>GENOME REANNOTATION</scope>
    <source>
        <strain>SC5314 / ATCC MYA-2876</strain>
    </source>
</reference>
<reference key="3">
    <citation type="journal article" date="2013" name="Genome Biol.">
        <title>Assembly of a phased diploid Candida albicans genome facilitates allele-specific measurements and provides a simple model for repeat and indel structure.</title>
        <authorList>
            <person name="Muzzey D."/>
            <person name="Schwartz K."/>
            <person name="Weissman J.S."/>
            <person name="Sherlock G."/>
        </authorList>
    </citation>
    <scope>NUCLEOTIDE SEQUENCE [LARGE SCALE GENOMIC DNA]</scope>
    <scope>GENOME REANNOTATION</scope>
    <source>
        <strain>SC5314 / ATCC MYA-2876</strain>
    </source>
</reference>
<reference key="4">
    <citation type="journal article" date="2011" name="Curr. Biol.">
        <title>The requirement for the Dam1 complex is dependent upon the number of kinetochore proteins and microtubules.</title>
        <authorList>
            <person name="Burrack L.S."/>
            <person name="Applen S.E."/>
            <person name="Berman J."/>
        </authorList>
    </citation>
    <scope>SUBCELLULAR LOCATION</scope>
    <scope>DISRUPTION PHENOTYPE</scope>
</reference>
<reference key="5">
    <citation type="journal article" date="2011" name="Eukaryot. Cell">
        <title>The essentiality of the fungus-specific Dam1 complex is correlated with a one-kinetochore-one-microtubule interaction present throughout the cell cycle, independent of the nature of a centromere.</title>
        <authorList>
            <person name="Thakur J."/>
            <person name="Sanyal K."/>
        </authorList>
    </citation>
    <scope>FUNCTION</scope>
    <scope>SUBCELLULAR LOCATION</scope>
    <scope>DISRUPTION PHENOTYPE</scope>
</reference>
<dbReference type="EMBL" id="CP017623">
    <property type="protein sequence ID" value="AOW26605.1"/>
    <property type="molecule type" value="Genomic_DNA"/>
</dbReference>
<dbReference type="RefSeq" id="XP_723523.1">
    <property type="nucleotide sequence ID" value="XM_718430.1"/>
</dbReference>
<dbReference type="SMR" id="Q5APC8"/>
<dbReference type="BioGRID" id="1217914">
    <property type="interactions" value="1"/>
</dbReference>
<dbReference type="FunCoup" id="Q5APC8">
    <property type="interactions" value="177"/>
</dbReference>
<dbReference type="STRING" id="237561.Q5APC8"/>
<dbReference type="EnsemblFungi" id="C1_09730W_A-T">
    <property type="protein sequence ID" value="C1_09730W_A-T-p1"/>
    <property type="gene ID" value="C1_09730W_A"/>
</dbReference>
<dbReference type="GeneID" id="3634820"/>
<dbReference type="KEGG" id="cal:CAALFM_C109730WA"/>
<dbReference type="CGD" id="CAL0000195338">
    <property type="gene designation" value="DAM1"/>
</dbReference>
<dbReference type="VEuPathDB" id="FungiDB:C1_09730W_A"/>
<dbReference type="eggNOG" id="ENOG502S08R">
    <property type="taxonomic scope" value="Eukaryota"/>
</dbReference>
<dbReference type="HOGENOM" id="CLU_092107_0_0_1"/>
<dbReference type="InParanoid" id="Q5APC8"/>
<dbReference type="OMA" id="PKIHYPV"/>
<dbReference type="OrthoDB" id="5586015at2759"/>
<dbReference type="PRO" id="PR:Q5APC8"/>
<dbReference type="Proteomes" id="UP000000559">
    <property type="component" value="Chromosome 1"/>
</dbReference>
<dbReference type="GO" id="GO:0005737">
    <property type="term" value="C:cytoplasm"/>
    <property type="evidence" value="ECO:0007669"/>
    <property type="project" value="UniProtKB-KW"/>
</dbReference>
<dbReference type="GO" id="GO:0042729">
    <property type="term" value="C:DASH complex"/>
    <property type="evidence" value="ECO:0000314"/>
    <property type="project" value="CGD"/>
</dbReference>
<dbReference type="GO" id="GO:0000776">
    <property type="term" value="C:kinetochore"/>
    <property type="evidence" value="ECO:0000314"/>
    <property type="project" value="UniProtKB"/>
</dbReference>
<dbReference type="GO" id="GO:1990537">
    <property type="term" value="C:mitotic spindle polar microtubule"/>
    <property type="evidence" value="ECO:0000318"/>
    <property type="project" value="GO_Central"/>
</dbReference>
<dbReference type="GO" id="GO:0044732">
    <property type="term" value="C:mitotic spindle pole body"/>
    <property type="evidence" value="ECO:0000318"/>
    <property type="project" value="GO_Central"/>
</dbReference>
<dbReference type="GO" id="GO:0008608">
    <property type="term" value="P:attachment of spindle microtubules to kinetochore"/>
    <property type="evidence" value="ECO:0000250"/>
    <property type="project" value="UniProtKB"/>
</dbReference>
<dbReference type="GO" id="GO:0051301">
    <property type="term" value="P:cell division"/>
    <property type="evidence" value="ECO:0007669"/>
    <property type="project" value="UniProtKB-KW"/>
</dbReference>
<dbReference type="GO" id="GO:0030447">
    <property type="term" value="P:filamentous growth"/>
    <property type="evidence" value="ECO:0000315"/>
    <property type="project" value="CGD"/>
</dbReference>
<dbReference type="GO" id="GO:1990758">
    <property type="term" value="P:mitotic sister chromatid biorientation"/>
    <property type="evidence" value="ECO:0000250"/>
    <property type="project" value="UniProtKB"/>
</dbReference>
<dbReference type="GO" id="GO:0007052">
    <property type="term" value="P:mitotic spindle organization"/>
    <property type="evidence" value="ECO:0000247"/>
    <property type="project" value="CGD"/>
</dbReference>
<dbReference type="GO" id="GO:1990976">
    <property type="term" value="P:protein transport along microtubule to mitotic spindle pole body"/>
    <property type="evidence" value="ECO:0000250"/>
    <property type="project" value="UniProtKB"/>
</dbReference>
<dbReference type="InterPro" id="IPR013962">
    <property type="entry name" value="DASH_Dam1"/>
</dbReference>
<dbReference type="PANTHER" id="PTHR28113">
    <property type="entry name" value="DASH COMPLEX SUBUNIT DAM1"/>
    <property type="match status" value="1"/>
</dbReference>
<dbReference type="PANTHER" id="PTHR28113:SF1">
    <property type="entry name" value="DASH COMPLEX SUBUNIT DAM1"/>
    <property type="match status" value="1"/>
</dbReference>
<dbReference type="Pfam" id="PF08653">
    <property type="entry name" value="DASH_Dam1"/>
    <property type="match status" value="1"/>
</dbReference>
<evidence type="ECO:0000250" key="1">
    <source>
        <dbReference type="UniProtKB" id="P53267"/>
    </source>
</evidence>
<evidence type="ECO:0000250" key="2">
    <source>
        <dbReference type="UniProtKB" id="Q9HDZ6"/>
    </source>
</evidence>
<evidence type="ECO:0000255" key="3"/>
<evidence type="ECO:0000256" key="4">
    <source>
        <dbReference type="SAM" id="MobiDB-lite"/>
    </source>
</evidence>
<evidence type="ECO:0000269" key="5">
    <source>
    </source>
</evidence>
<evidence type="ECO:0000269" key="6">
    <source>
    </source>
</evidence>
<evidence type="ECO:0000305" key="7"/>
<evidence type="ECO:0000305" key="8">
    <source>
    </source>
</evidence>
<sequence length="277" mass="31906">MSSSKPVTPRNDRRQNSGRRHSHRSSGIQLPSMSPKVHHYPIDAENLPMDSPEIVEKFASLAESMETLDLHMHDLCHIHDHISNQFNESFASFLYGLSMTMWCVDFPGCPSREQWEALISKRERKERIEVLKKRLADAQKLNDRLKLRLSDEAKQKPQQLTSQQRPTHGPTRQIKQQPRSVNFNTHSSDSISTNSYTSGDFNTNRRVSRIPQPSRSNLPSSRFQAPSKSGPNLNQPPRYMRGLFDGNNTLNTSNYSRIKKPIHNRSVNNLQNRPPFR</sequence>
<proteinExistence type="inferred from homology"/>
<organism>
    <name type="scientific">Candida albicans (strain SC5314 / ATCC MYA-2876)</name>
    <name type="common">Yeast</name>
    <dbReference type="NCBI Taxonomy" id="237561"/>
    <lineage>
        <taxon>Eukaryota</taxon>
        <taxon>Fungi</taxon>
        <taxon>Dikarya</taxon>
        <taxon>Ascomycota</taxon>
        <taxon>Saccharomycotina</taxon>
        <taxon>Pichiomycetes</taxon>
        <taxon>Debaryomycetaceae</taxon>
        <taxon>Candida/Lodderomyces clade</taxon>
        <taxon>Candida</taxon>
    </lineage>
</organism>
<name>DAM1_CANAL</name>
<feature type="chain" id="PRO_0000127657" description="DASH complex subunit DAM1">
    <location>
        <begin position="1"/>
        <end position="277"/>
    </location>
</feature>
<feature type="region of interest" description="Disordered" evidence="4">
    <location>
        <begin position="1"/>
        <end position="36"/>
    </location>
</feature>
<feature type="region of interest" description="Disordered" evidence="4">
    <location>
        <begin position="147"/>
        <end position="242"/>
    </location>
</feature>
<feature type="coiled-coil region" evidence="3">
    <location>
        <begin position="119"/>
        <end position="156"/>
    </location>
</feature>
<feature type="compositionally biased region" description="Polar residues" evidence="4">
    <location>
        <begin position="156"/>
        <end position="166"/>
    </location>
</feature>
<feature type="compositionally biased region" description="Polar residues" evidence="4">
    <location>
        <begin position="173"/>
        <end position="184"/>
    </location>
</feature>
<feature type="compositionally biased region" description="Low complexity" evidence="4">
    <location>
        <begin position="185"/>
        <end position="198"/>
    </location>
</feature>
<feature type="compositionally biased region" description="Polar residues" evidence="4">
    <location>
        <begin position="199"/>
        <end position="235"/>
    </location>
</feature>
<keyword id="KW-0131">Cell cycle</keyword>
<keyword id="KW-0132">Cell division</keyword>
<keyword id="KW-0137">Centromere</keyword>
<keyword id="KW-0158">Chromosome</keyword>
<keyword id="KW-0159">Chromosome partition</keyword>
<keyword id="KW-0175">Coiled coil</keyword>
<keyword id="KW-0963">Cytoplasm</keyword>
<keyword id="KW-0206">Cytoskeleton</keyword>
<keyword id="KW-0995">Kinetochore</keyword>
<keyword id="KW-0493">Microtubule</keyword>
<keyword id="KW-0498">Mitosis</keyword>
<keyword id="KW-0539">Nucleus</keyword>
<keyword id="KW-1185">Reference proteome</keyword>
<gene>
    <name type="primary">DAM1</name>
    <name type="ordered locus">CAALFM_C109730WA</name>
    <name type="ORF">CaO19.12300</name>
    <name type="ORF">CaO19.4837</name>
</gene>
<protein>
    <recommendedName>
        <fullName>DASH complex subunit DAM1</fullName>
    </recommendedName>
    <alternativeName>
        <fullName>Outer kinetochore protein DAM1</fullName>
    </alternativeName>
</protein>